<feature type="chain" id="PRO_0000159684" description="Endonuclease V">
    <location>
        <begin position="1"/>
        <end position="221"/>
    </location>
</feature>
<feature type="binding site" evidence="1">
    <location>
        <position position="38"/>
    </location>
    <ligand>
        <name>Mg(2+)</name>
        <dbReference type="ChEBI" id="CHEBI:18420"/>
    </ligand>
</feature>
<feature type="binding site" evidence="1">
    <location>
        <position position="104"/>
    </location>
    <ligand>
        <name>Mg(2+)</name>
        <dbReference type="ChEBI" id="CHEBI:18420"/>
    </ligand>
</feature>
<feature type="site" description="Interaction with target DNA" evidence="1">
    <location>
        <position position="74"/>
    </location>
</feature>
<gene>
    <name evidence="1" type="primary">nfi</name>
    <name type="ordered locus">AF_0129</name>
</gene>
<protein>
    <recommendedName>
        <fullName evidence="1">Endonuclease V</fullName>
        <ecNumber evidence="1">3.1.21.7</ecNumber>
    </recommendedName>
    <alternativeName>
        <fullName evidence="1">Deoxyinosine 3'endonuclease</fullName>
    </alternativeName>
    <alternativeName>
        <fullName evidence="1">Deoxyribonuclease V</fullName>
        <shortName evidence="1">DNase V</shortName>
    </alternativeName>
</protein>
<reference key="1">
    <citation type="journal article" date="1997" name="Nature">
        <title>The complete genome sequence of the hyperthermophilic, sulphate-reducing archaeon Archaeoglobus fulgidus.</title>
        <authorList>
            <person name="Klenk H.-P."/>
            <person name="Clayton R.A."/>
            <person name="Tomb J.-F."/>
            <person name="White O."/>
            <person name="Nelson K.E."/>
            <person name="Ketchum K.A."/>
            <person name="Dodson R.J."/>
            <person name="Gwinn M.L."/>
            <person name="Hickey E.K."/>
            <person name="Peterson J.D."/>
            <person name="Richardson D.L."/>
            <person name="Kerlavage A.R."/>
            <person name="Graham D.E."/>
            <person name="Kyrpides N.C."/>
            <person name="Fleischmann R.D."/>
            <person name="Quackenbush J."/>
            <person name="Lee N.H."/>
            <person name="Sutton G.G."/>
            <person name="Gill S.R."/>
            <person name="Kirkness E.F."/>
            <person name="Dougherty B.A."/>
            <person name="McKenney K."/>
            <person name="Adams M.D."/>
            <person name="Loftus B.J."/>
            <person name="Peterson S.N."/>
            <person name="Reich C.I."/>
            <person name="McNeil L.K."/>
            <person name="Badger J.H."/>
            <person name="Glodek A."/>
            <person name="Zhou L."/>
            <person name="Overbeek R."/>
            <person name="Gocayne J.D."/>
            <person name="Weidman J.F."/>
            <person name="McDonald L.A."/>
            <person name="Utterback T.R."/>
            <person name="Cotton M.D."/>
            <person name="Spriggs T."/>
            <person name="Artiach P."/>
            <person name="Kaine B.P."/>
            <person name="Sykes S.M."/>
            <person name="Sadow P.W."/>
            <person name="D'Andrea K.P."/>
            <person name="Bowman C."/>
            <person name="Fujii C."/>
            <person name="Garland S.A."/>
            <person name="Mason T.M."/>
            <person name="Olsen G.J."/>
            <person name="Fraser C.M."/>
            <person name="Smith H.O."/>
            <person name="Woese C.R."/>
            <person name="Venter J.C."/>
        </authorList>
    </citation>
    <scope>NUCLEOTIDE SEQUENCE [LARGE SCALE GENOMIC DNA]</scope>
    <source>
        <strain>ATCC 49558 / DSM 4304 / JCM 9628 / NBRC 100126 / VC-16</strain>
    </source>
</reference>
<reference key="2">
    <citation type="journal article" date="2000" name="Mutat. Res.">
        <title>A deoxyinosine specific endonuclease from hyperthermophile, Archaeoglobus fulgidus: a homolog of Escherichia coli endonuclease V.</title>
        <authorList>
            <person name="Liu J."/>
            <person name="He B."/>
            <person name="Qing H."/>
            <person name="Kow Y.W."/>
        </authorList>
    </citation>
    <scope>FUNCTION</scope>
    <scope>CATALYTIC ACTIVITY</scope>
    <scope>COFACTOR</scope>
    <scope>BIOPHYSICOCHEMICAL PROPERTIES</scope>
</reference>
<evidence type="ECO:0000255" key="1">
    <source>
        <dbReference type="HAMAP-Rule" id="MF_00801"/>
    </source>
</evidence>
<evidence type="ECO:0000269" key="2">
    <source>
    </source>
</evidence>
<name>NFI_ARCFU</name>
<comment type="function">
    <text evidence="1 2">DNA repair enzyme involved in the repair of deaminated bases. Selectively cleaves double-stranded DNA at the second phosphodiester bond 3' to a deoxyinosine leaving behind the intact lesion on the nicked DNA. Recognizes only deoxyinosine.</text>
</comment>
<comment type="catalytic activity">
    <reaction evidence="1 2">
        <text>Endonucleolytic cleavage at apurinic or apyrimidinic sites to products with a 5'-phosphate.</text>
        <dbReference type="EC" id="3.1.21.7"/>
    </reaction>
</comment>
<comment type="cofactor">
    <cofactor evidence="1 2">
        <name>Mg(2+)</name>
        <dbReference type="ChEBI" id="CHEBI:18420"/>
    </cofactor>
</comment>
<comment type="biophysicochemical properties">
    <temperatureDependence>
        <text evidence="2">Optimum temperature is 85 degrees Celsius.</text>
    </temperatureDependence>
</comment>
<comment type="subcellular location">
    <subcellularLocation>
        <location evidence="1">Cytoplasm</location>
    </subcellularLocation>
</comment>
<comment type="similarity">
    <text evidence="1">Belongs to the endonuclease V family.</text>
</comment>
<organism>
    <name type="scientific">Archaeoglobus fulgidus (strain ATCC 49558 / DSM 4304 / JCM 9628 / NBRC 100126 / VC-16)</name>
    <dbReference type="NCBI Taxonomy" id="224325"/>
    <lineage>
        <taxon>Archaea</taxon>
        <taxon>Methanobacteriati</taxon>
        <taxon>Methanobacteriota</taxon>
        <taxon>Archaeoglobi</taxon>
        <taxon>Archaeoglobales</taxon>
        <taxon>Archaeoglobaceae</taxon>
        <taxon>Archaeoglobus</taxon>
    </lineage>
</organism>
<proteinExistence type="evidence at protein level"/>
<accession>O30108</accession>
<dbReference type="EC" id="3.1.21.7" evidence="1"/>
<dbReference type="EMBL" id="AE000782">
    <property type="protein sequence ID" value="AAB91100.1"/>
    <property type="molecule type" value="Genomic_DNA"/>
</dbReference>
<dbReference type="PIR" id="A69266">
    <property type="entry name" value="A69266"/>
</dbReference>
<dbReference type="SMR" id="O30108"/>
<dbReference type="STRING" id="224325.AF_0129"/>
<dbReference type="PaxDb" id="224325-AF_0129"/>
<dbReference type="DNASU" id="1483340"/>
<dbReference type="EnsemblBacteria" id="AAB91100">
    <property type="protein sequence ID" value="AAB91100"/>
    <property type="gene ID" value="AF_0129"/>
</dbReference>
<dbReference type="KEGG" id="afu:AF_0129"/>
<dbReference type="eggNOG" id="arCOG00929">
    <property type="taxonomic scope" value="Archaea"/>
</dbReference>
<dbReference type="HOGENOM" id="CLU_047631_1_1_2"/>
<dbReference type="OrthoDB" id="7885at2157"/>
<dbReference type="PhylomeDB" id="O30108"/>
<dbReference type="Proteomes" id="UP000002199">
    <property type="component" value="Chromosome"/>
</dbReference>
<dbReference type="GO" id="GO:0005737">
    <property type="term" value="C:cytoplasm"/>
    <property type="evidence" value="ECO:0007669"/>
    <property type="project" value="UniProtKB-SubCell"/>
</dbReference>
<dbReference type="GO" id="GO:0043737">
    <property type="term" value="F:deoxyribonuclease V activity"/>
    <property type="evidence" value="ECO:0007669"/>
    <property type="project" value="UniProtKB-UniRule"/>
</dbReference>
<dbReference type="GO" id="GO:0000287">
    <property type="term" value="F:magnesium ion binding"/>
    <property type="evidence" value="ECO:0007669"/>
    <property type="project" value="UniProtKB-UniRule"/>
</dbReference>
<dbReference type="GO" id="GO:0016891">
    <property type="term" value="F:RNA endonuclease activity, producing 5'-phosphomonoesters"/>
    <property type="evidence" value="ECO:0007669"/>
    <property type="project" value="TreeGrafter"/>
</dbReference>
<dbReference type="GO" id="GO:0003727">
    <property type="term" value="F:single-stranded RNA binding"/>
    <property type="evidence" value="ECO:0007669"/>
    <property type="project" value="TreeGrafter"/>
</dbReference>
<dbReference type="GO" id="GO:0006281">
    <property type="term" value="P:DNA repair"/>
    <property type="evidence" value="ECO:0007669"/>
    <property type="project" value="UniProtKB-UniRule"/>
</dbReference>
<dbReference type="CDD" id="cd06559">
    <property type="entry name" value="Endonuclease_V"/>
    <property type="match status" value="1"/>
</dbReference>
<dbReference type="Gene3D" id="3.30.2170.10">
    <property type="entry name" value="archaeoglobus fulgidus dsm 4304 superfamily"/>
    <property type="match status" value="1"/>
</dbReference>
<dbReference type="HAMAP" id="MF_00801">
    <property type="entry name" value="Endonuclease_5"/>
    <property type="match status" value="1"/>
</dbReference>
<dbReference type="InterPro" id="IPR007581">
    <property type="entry name" value="Endonuclease-V"/>
</dbReference>
<dbReference type="PANTHER" id="PTHR28511">
    <property type="entry name" value="ENDONUCLEASE V"/>
    <property type="match status" value="1"/>
</dbReference>
<dbReference type="PANTHER" id="PTHR28511:SF1">
    <property type="entry name" value="ENDONUCLEASE V"/>
    <property type="match status" value="1"/>
</dbReference>
<dbReference type="Pfam" id="PF04493">
    <property type="entry name" value="Endonuclease_5"/>
    <property type="match status" value="1"/>
</dbReference>
<sequence length="221" mass="24872">MLQMNLEELRRIQEEMSRSVVLEDLIPLEELEYVVGVDQAFISDEVVSCAVKLTFPELEVVDKAVRVEKVTFPYIPTFLMFREGEPAVNAVKGLVDDRAAIMVDGSGIAHPRRCGLATYIALKLRKPTVGITKKRLFGEMVEVEDGLWRLLDGSETIGYALKSCRRCKPIFISPGSYISPDSALELTRKCLKGYKLPEPIRIADKLTKEVKRELTPTSKLK</sequence>
<keyword id="KW-0963">Cytoplasm</keyword>
<keyword id="KW-0227">DNA damage</keyword>
<keyword id="KW-0234">DNA repair</keyword>
<keyword id="KW-0255">Endonuclease</keyword>
<keyword id="KW-0378">Hydrolase</keyword>
<keyword id="KW-0460">Magnesium</keyword>
<keyword id="KW-0479">Metal-binding</keyword>
<keyword id="KW-0540">Nuclease</keyword>
<keyword id="KW-1185">Reference proteome</keyword>